<evidence type="ECO:0000255" key="1">
    <source>
        <dbReference type="HAMAP-Rule" id="MF_01633"/>
    </source>
</evidence>
<comment type="function">
    <text evidence="1">Catalyzes the ATP-dependent conversion of 7-carboxy-7-deazaguanine (CDG) to 7-cyano-7-deazaguanine (preQ(0)).</text>
</comment>
<comment type="catalytic activity">
    <reaction evidence="1">
        <text>7-carboxy-7-deazaguanine + NH4(+) + ATP = 7-cyano-7-deazaguanine + ADP + phosphate + H2O + H(+)</text>
        <dbReference type="Rhea" id="RHEA:27982"/>
        <dbReference type="ChEBI" id="CHEBI:15377"/>
        <dbReference type="ChEBI" id="CHEBI:15378"/>
        <dbReference type="ChEBI" id="CHEBI:28938"/>
        <dbReference type="ChEBI" id="CHEBI:30616"/>
        <dbReference type="ChEBI" id="CHEBI:43474"/>
        <dbReference type="ChEBI" id="CHEBI:45075"/>
        <dbReference type="ChEBI" id="CHEBI:61036"/>
        <dbReference type="ChEBI" id="CHEBI:456216"/>
        <dbReference type="EC" id="6.3.4.20"/>
    </reaction>
</comment>
<comment type="cofactor">
    <cofactor evidence="1">
        <name>Zn(2+)</name>
        <dbReference type="ChEBI" id="CHEBI:29105"/>
    </cofactor>
    <text evidence="1">Binds 1 zinc ion per subunit.</text>
</comment>
<comment type="pathway">
    <text evidence="1">Purine metabolism; 7-cyano-7-deazaguanine biosynthesis.</text>
</comment>
<comment type="similarity">
    <text evidence="1">Belongs to the QueC family.</text>
</comment>
<dbReference type="EC" id="6.3.4.20" evidence="1"/>
<dbReference type="EMBL" id="AE008917">
    <property type="protein sequence ID" value="AAL51277.1"/>
    <property type="molecule type" value="Genomic_DNA"/>
</dbReference>
<dbReference type="PIR" id="AB3264">
    <property type="entry name" value="AB3264"/>
</dbReference>
<dbReference type="RefSeq" id="WP_002965038.1">
    <property type="nucleotide sequence ID" value="NZ_GG703778.1"/>
</dbReference>
<dbReference type="SMR" id="Q8YJI8"/>
<dbReference type="GeneID" id="97534751"/>
<dbReference type="KEGG" id="bme:BMEI0095"/>
<dbReference type="KEGG" id="bmel:DK63_1337"/>
<dbReference type="PATRIC" id="fig|224914.52.peg.1413"/>
<dbReference type="eggNOG" id="COG0603">
    <property type="taxonomic scope" value="Bacteria"/>
</dbReference>
<dbReference type="PhylomeDB" id="Q8YJI8"/>
<dbReference type="UniPathway" id="UPA00391"/>
<dbReference type="Proteomes" id="UP000000419">
    <property type="component" value="Chromosome I"/>
</dbReference>
<dbReference type="GO" id="GO:0005524">
    <property type="term" value="F:ATP binding"/>
    <property type="evidence" value="ECO:0007669"/>
    <property type="project" value="UniProtKB-UniRule"/>
</dbReference>
<dbReference type="GO" id="GO:0016879">
    <property type="term" value="F:ligase activity, forming carbon-nitrogen bonds"/>
    <property type="evidence" value="ECO:0007669"/>
    <property type="project" value="UniProtKB-UniRule"/>
</dbReference>
<dbReference type="GO" id="GO:0008270">
    <property type="term" value="F:zinc ion binding"/>
    <property type="evidence" value="ECO:0007669"/>
    <property type="project" value="UniProtKB-UniRule"/>
</dbReference>
<dbReference type="GO" id="GO:0008616">
    <property type="term" value="P:queuosine biosynthetic process"/>
    <property type="evidence" value="ECO:0007669"/>
    <property type="project" value="UniProtKB-UniRule"/>
</dbReference>
<dbReference type="CDD" id="cd01995">
    <property type="entry name" value="QueC-like"/>
    <property type="match status" value="1"/>
</dbReference>
<dbReference type="Gene3D" id="3.40.50.620">
    <property type="entry name" value="HUPs"/>
    <property type="match status" value="1"/>
</dbReference>
<dbReference type="HAMAP" id="MF_01633">
    <property type="entry name" value="QueC"/>
    <property type="match status" value="1"/>
</dbReference>
<dbReference type="InterPro" id="IPR018317">
    <property type="entry name" value="QueC"/>
</dbReference>
<dbReference type="InterPro" id="IPR014729">
    <property type="entry name" value="Rossmann-like_a/b/a_fold"/>
</dbReference>
<dbReference type="NCBIfam" id="TIGR00364">
    <property type="entry name" value="7-cyano-7-deazaguanine synthase QueC"/>
    <property type="match status" value="1"/>
</dbReference>
<dbReference type="PANTHER" id="PTHR42914">
    <property type="entry name" value="7-CYANO-7-DEAZAGUANINE SYNTHASE"/>
    <property type="match status" value="1"/>
</dbReference>
<dbReference type="PANTHER" id="PTHR42914:SF1">
    <property type="entry name" value="7-CYANO-7-DEAZAGUANINE SYNTHASE"/>
    <property type="match status" value="1"/>
</dbReference>
<dbReference type="Pfam" id="PF06508">
    <property type="entry name" value="QueC"/>
    <property type="match status" value="1"/>
</dbReference>
<dbReference type="PIRSF" id="PIRSF006293">
    <property type="entry name" value="ExsB"/>
    <property type="match status" value="1"/>
</dbReference>
<dbReference type="SUPFAM" id="SSF52402">
    <property type="entry name" value="Adenine nucleotide alpha hydrolases-like"/>
    <property type="match status" value="1"/>
</dbReference>
<protein>
    <recommendedName>
        <fullName evidence="1">7-cyano-7-deazaguanine synthase</fullName>
        <ecNumber evidence="1">6.3.4.20</ecNumber>
    </recommendedName>
    <alternativeName>
        <fullName evidence="1">7-cyano-7-carbaguanine synthase</fullName>
    </alternativeName>
    <alternativeName>
        <fullName evidence="1">PreQ(0) synthase</fullName>
    </alternativeName>
    <alternativeName>
        <fullName evidence="1">Queuosine biosynthesis protein QueC</fullName>
    </alternativeName>
</protein>
<proteinExistence type="inferred from homology"/>
<organism>
    <name type="scientific">Brucella melitensis biotype 1 (strain ATCC 23456 / CCUG 17765 / NCTC 10094 / 16M)</name>
    <dbReference type="NCBI Taxonomy" id="224914"/>
    <lineage>
        <taxon>Bacteria</taxon>
        <taxon>Pseudomonadati</taxon>
        <taxon>Pseudomonadota</taxon>
        <taxon>Alphaproteobacteria</taxon>
        <taxon>Hyphomicrobiales</taxon>
        <taxon>Brucellaceae</taxon>
        <taxon>Brucella/Ochrobactrum group</taxon>
        <taxon>Brucella</taxon>
    </lineage>
</organism>
<keyword id="KW-0067">ATP-binding</keyword>
<keyword id="KW-0436">Ligase</keyword>
<keyword id="KW-0479">Metal-binding</keyword>
<keyword id="KW-0547">Nucleotide-binding</keyword>
<keyword id="KW-0671">Queuosine biosynthesis</keyword>
<keyword id="KW-0862">Zinc</keyword>
<name>QUEC_BRUME</name>
<reference key="1">
    <citation type="journal article" date="2002" name="Proc. Natl. Acad. Sci. U.S.A.">
        <title>The genome sequence of the facultative intracellular pathogen Brucella melitensis.</title>
        <authorList>
            <person name="DelVecchio V.G."/>
            <person name="Kapatral V."/>
            <person name="Redkar R.J."/>
            <person name="Patra G."/>
            <person name="Mujer C."/>
            <person name="Los T."/>
            <person name="Ivanova N."/>
            <person name="Anderson I."/>
            <person name="Bhattacharyya A."/>
            <person name="Lykidis A."/>
            <person name="Reznik G."/>
            <person name="Jablonski L."/>
            <person name="Larsen N."/>
            <person name="D'Souza M."/>
            <person name="Bernal A."/>
            <person name="Mazur M."/>
            <person name="Goltsman E."/>
            <person name="Selkov E."/>
            <person name="Elzer P.H."/>
            <person name="Hagius S."/>
            <person name="O'Callaghan D."/>
            <person name="Letesson J.-J."/>
            <person name="Haselkorn R."/>
            <person name="Kyrpides N.C."/>
            <person name="Overbeek R."/>
        </authorList>
    </citation>
    <scope>NUCLEOTIDE SEQUENCE [LARGE SCALE GENOMIC DNA]</scope>
    <source>
        <strain>ATCC 23456 / CCUG 17765 / NCTC 10094 / 16M</strain>
    </source>
</reference>
<accession>Q8YJI8</accession>
<sequence>MKTLVICSGGLDSVSLAHKMAAEHELTGLLSFDYGQRHKKELDFAQACAKRLGVPHQIIDIRTIGASLTGSALTDDVDVPDGHYAEETMKVTVVPNRNAIMLAIAFGVAAAQKADAVALAVHGGDHFIYPDCRPGFIEAFQTMQKHALDGYADVKLLAPYVHATKADIVADGAKYRTPFEATWSCYKGADRHCGRCGTCVERREAFHLAGIDDPTSYEDADFWRATTQKRNA</sequence>
<gene>
    <name evidence="1" type="primary">queC</name>
    <name type="ordered locus">BMEI0095</name>
</gene>
<feature type="chain" id="PRO_0000246815" description="7-cyano-7-deazaguanine synthase">
    <location>
        <begin position="1"/>
        <end position="232"/>
    </location>
</feature>
<feature type="binding site" evidence="1">
    <location>
        <begin position="7"/>
        <end position="17"/>
    </location>
    <ligand>
        <name>ATP</name>
        <dbReference type="ChEBI" id="CHEBI:30616"/>
    </ligand>
</feature>
<feature type="binding site" evidence="1">
    <location>
        <position position="185"/>
    </location>
    <ligand>
        <name>Zn(2+)</name>
        <dbReference type="ChEBI" id="CHEBI:29105"/>
    </ligand>
</feature>
<feature type="binding site" evidence="1">
    <location>
        <position position="193"/>
    </location>
    <ligand>
        <name>Zn(2+)</name>
        <dbReference type="ChEBI" id="CHEBI:29105"/>
    </ligand>
</feature>
<feature type="binding site" evidence="1">
    <location>
        <position position="196"/>
    </location>
    <ligand>
        <name>Zn(2+)</name>
        <dbReference type="ChEBI" id="CHEBI:29105"/>
    </ligand>
</feature>
<feature type="binding site" evidence="1">
    <location>
        <position position="199"/>
    </location>
    <ligand>
        <name>Zn(2+)</name>
        <dbReference type="ChEBI" id="CHEBI:29105"/>
    </ligand>
</feature>